<protein>
    <recommendedName>
        <fullName>Putative antiporter subunit mnhD2</fullName>
    </recommendedName>
    <alternativeName>
        <fullName>Mrp complex subunit D2</fullName>
    </alternativeName>
    <alternativeName>
        <fullName>Putative NADH-ubiquinone oxidoreductase subunit mnhD2</fullName>
    </alternativeName>
</protein>
<evidence type="ECO:0000250" key="1"/>
<evidence type="ECO:0000255" key="2"/>
<evidence type="ECO:0000305" key="3"/>
<reference key="1">
    <citation type="journal article" date="2006" name="Lancet">
        <title>Complete genome sequence of USA300, an epidemic clone of community-acquired meticillin-resistant Staphylococcus aureus.</title>
        <authorList>
            <person name="Diep B.A."/>
            <person name="Gill S.R."/>
            <person name="Chang R.F."/>
            <person name="Phan T.H."/>
            <person name="Chen J.H."/>
            <person name="Davidson M.G."/>
            <person name="Lin F."/>
            <person name="Lin J."/>
            <person name="Carleton H.A."/>
            <person name="Mongodin E.F."/>
            <person name="Sensabaugh G.F."/>
            <person name="Perdreau-Remington F."/>
        </authorList>
    </citation>
    <scope>NUCLEOTIDE SEQUENCE [LARGE SCALE GENOMIC DNA]</scope>
    <source>
        <strain>USA300</strain>
    </source>
</reference>
<gene>
    <name type="primary">mnhD2</name>
    <name type="synonym">mrpD2</name>
    <name type="ordered locus">SAUSA300_0613</name>
</gene>
<keyword id="KW-0050">Antiport</keyword>
<keyword id="KW-1003">Cell membrane</keyword>
<keyword id="KW-0406">Ion transport</keyword>
<keyword id="KW-0472">Membrane</keyword>
<keyword id="KW-0812">Transmembrane</keyword>
<keyword id="KW-1133">Transmembrane helix</keyword>
<keyword id="KW-0813">Transport</keyword>
<accession>Q2FJ12</accession>
<proteinExistence type="inferred from homology"/>
<organism>
    <name type="scientific">Staphylococcus aureus (strain USA300)</name>
    <dbReference type="NCBI Taxonomy" id="367830"/>
    <lineage>
        <taxon>Bacteria</taxon>
        <taxon>Bacillati</taxon>
        <taxon>Bacillota</taxon>
        <taxon>Bacilli</taxon>
        <taxon>Bacillales</taxon>
        <taxon>Staphylococcaceae</taxon>
        <taxon>Staphylococcus</taxon>
    </lineage>
</organism>
<sequence>MLSNLLILPMLLPFLCALILVFLKNNDRISKYLYLGTMTITTIISLMLLIYVQRHRPITLDFGGWSAPFGIQFLGDSLSLIMVTTASFVITLIMAYGFGRGEHKANRYHLPSFILFLSVGVIGSFLTSDLFNLYVMFEIMLLASFVLITLGQSVEQLRAAIIYVVLNIIGSWLFLLGIGLLYKTVGTLNFSHIAMRLNDMGDNRTVTMISLIFLVAFSAKAALVLFMWLPKAYAVLNTELAALFAALMTKVGAYALIRFFTLLFDQHNDLIHPLLATMAAITMVIGAIGVIAYKDIKKIAAYQVIISIGFIILGLGTNTFAGINGAIFYLVNDIVVKTLLFFIIGSLVYITGYRQYQYLNGLAKKEPLFGVAFIIMIFAIGGVPPFSGFPGKVLIFQGALQNGNYIGLALMIITSLIAMYSLFRILFYMYFGDKDGEEVNFKKIPLYRKRILSILVVVVIAIGIAAPVVLNVTSDATELNTSDQLYQKLVNPHLKGED</sequence>
<feature type="chain" id="PRO_0000372242" description="Putative antiporter subunit mnhD2">
    <location>
        <begin position="1"/>
        <end position="498"/>
    </location>
</feature>
<feature type="transmembrane region" description="Helical" evidence="2">
    <location>
        <begin position="2"/>
        <end position="22"/>
    </location>
</feature>
<feature type="transmembrane region" description="Helical" evidence="2">
    <location>
        <begin position="32"/>
        <end position="52"/>
    </location>
</feature>
<feature type="transmembrane region" description="Helical" evidence="2">
    <location>
        <begin position="78"/>
        <end position="98"/>
    </location>
</feature>
<feature type="transmembrane region" description="Helical" evidence="2">
    <location>
        <begin position="108"/>
        <end position="128"/>
    </location>
</feature>
<feature type="transmembrane region" description="Helical" evidence="2">
    <location>
        <begin position="130"/>
        <end position="150"/>
    </location>
</feature>
<feature type="transmembrane region" description="Helical" evidence="2">
    <location>
        <begin position="161"/>
        <end position="181"/>
    </location>
</feature>
<feature type="transmembrane region" description="Helical" evidence="2">
    <location>
        <begin position="209"/>
        <end position="229"/>
    </location>
</feature>
<feature type="transmembrane region" description="Helical" evidence="2">
    <location>
        <begin position="240"/>
        <end position="260"/>
    </location>
</feature>
<feature type="transmembrane region" description="Helical" evidence="2">
    <location>
        <begin position="271"/>
        <end position="291"/>
    </location>
</feature>
<feature type="transmembrane region" description="Helical" evidence="2">
    <location>
        <begin position="308"/>
        <end position="328"/>
    </location>
</feature>
<feature type="transmembrane region" description="Helical" evidence="2">
    <location>
        <begin position="330"/>
        <end position="350"/>
    </location>
</feature>
<feature type="transmembrane region" description="Helical" evidence="2">
    <location>
        <begin position="369"/>
        <end position="389"/>
    </location>
</feature>
<feature type="transmembrane region" description="Helical" evidence="2">
    <location>
        <begin position="403"/>
        <end position="423"/>
    </location>
</feature>
<feature type="transmembrane region" description="Helical" evidence="2">
    <location>
        <begin position="451"/>
        <end position="471"/>
    </location>
</feature>
<dbReference type="EMBL" id="CP000255">
    <property type="protein sequence ID" value="ABD21739.1"/>
    <property type="molecule type" value="Genomic_DNA"/>
</dbReference>
<dbReference type="RefSeq" id="WP_000950548.1">
    <property type="nucleotide sequence ID" value="NZ_CP027476.1"/>
</dbReference>
<dbReference type="SMR" id="Q2FJ12"/>
<dbReference type="KEGG" id="saa:SAUSA300_0613"/>
<dbReference type="HOGENOM" id="CLU_007100_9_2_9"/>
<dbReference type="OMA" id="YVAHHIT"/>
<dbReference type="Proteomes" id="UP000001939">
    <property type="component" value="Chromosome"/>
</dbReference>
<dbReference type="GO" id="GO:0005886">
    <property type="term" value="C:plasma membrane"/>
    <property type="evidence" value="ECO:0007669"/>
    <property type="project" value="UniProtKB-SubCell"/>
</dbReference>
<dbReference type="GO" id="GO:0015297">
    <property type="term" value="F:antiporter activity"/>
    <property type="evidence" value="ECO:0007669"/>
    <property type="project" value="UniProtKB-KW"/>
</dbReference>
<dbReference type="GO" id="GO:0008137">
    <property type="term" value="F:NADH dehydrogenase (ubiquinone) activity"/>
    <property type="evidence" value="ECO:0007669"/>
    <property type="project" value="InterPro"/>
</dbReference>
<dbReference type="GO" id="GO:0042773">
    <property type="term" value="P:ATP synthesis coupled electron transport"/>
    <property type="evidence" value="ECO:0007669"/>
    <property type="project" value="InterPro"/>
</dbReference>
<dbReference type="InterPro" id="IPR050586">
    <property type="entry name" value="CPA3_Na-H_Antiporter_D"/>
</dbReference>
<dbReference type="InterPro" id="IPR003918">
    <property type="entry name" value="NADH_UbQ_OxRdtase"/>
</dbReference>
<dbReference type="InterPro" id="IPR001750">
    <property type="entry name" value="ND/Mrp_TM"/>
</dbReference>
<dbReference type="NCBIfam" id="NF009306">
    <property type="entry name" value="PRK12663.1"/>
    <property type="match status" value="1"/>
</dbReference>
<dbReference type="PANTHER" id="PTHR42703:SF1">
    <property type="entry name" value="NA(+)_H(+) ANTIPORTER SUBUNIT D1"/>
    <property type="match status" value="1"/>
</dbReference>
<dbReference type="PANTHER" id="PTHR42703">
    <property type="entry name" value="NADH DEHYDROGENASE"/>
    <property type="match status" value="1"/>
</dbReference>
<dbReference type="Pfam" id="PF00361">
    <property type="entry name" value="Proton_antipo_M"/>
    <property type="match status" value="1"/>
</dbReference>
<dbReference type="PRINTS" id="PR01437">
    <property type="entry name" value="NUOXDRDTASE4"/>
</dbReference>
<name>MNHD2_STAA3</name>
<comment type="subunit">
    <text evidence="1">May form a heterooligomeric complex that consists of seven subunits: mnhA2, mnhB2, mnhC2, mnhD2, mnhE2, mnhF2 and mnhG2.</text>
</comment>
<comment type="subcellular location">
    <subcellularLocation>
        <location evidence="3">Cell membrane</location>
        <topology evidence="3">Multi-pass membrane protein</topology>
    </subcellularLocation>
</comment>
<comment type="similarity">
    <text evidence="3">Belongs to the CPA3 antiporters (TC 2.A.63) subunit D family.</text>
</comment>